<reference key="1">
    <citation type="journal article" date="2003" name="Proc. Natl. Acad. Sci. U.S.A.">
        <title>The complete genome sequence of the carcinogenic bacterium Helicobacter hepaticus.</title>
        <authorList>
            <person name="Suerbaum S."/>
            <person name="Josenhans C."/>
            <person name="Sterzenbach T."/>
            <person name="Drescher B."/>
            <person name="Brandt P."/>
            <person name="Bell M."/>
            <person name="Droege M."/>
            <person name="Fartmann B."/>
            <person name="Fischer H.-P."/>
            <person name="Ge Z."/>
            <person name="Hoerster A."/>
            <person name="Holland R."/>
            <person name="Klein K."/>
            <person name="Koenig J."/>
            <person name="Macko L."/>
            <person name="Mendz G.L."/>
            <person name="Nyakatura G."/>
            <person name="Schauer D.B."/>
            <person name="Shen Z."/>
            <person name="Weber J."/>
            <person name="Frosch M."/>
            <person name="Fox J.G."/>
        </authorList>
    </citation>
    <scope>NUCLEOTIDE SEQUENCE [LARGE SCALE GENOMIC DNA]</scope>
    <source>
        <strain>ATCC 51449 / 3B1</strain>
    </source>
</reference>
<name>RL17_HELHP</name>
<organism>
    <name type="scientific">Helicobacter hepaticus (strain ATCC 51449 / 3B1)</name>
    <dbReference type="NCBI Taxonomy" id="235279"/>
    <lineage>
        <taxon>Bacteria</taxon>
        <taxon>Pseudomonadati</taxon>
        <taxon>Campylobacterota</taxon>
        <taxon>Epsilonproteobacteria</taxon>
        <taxon>Campylobacterales</taxon>
        <taxon>Helicobacteraceae</taxon>
        <taxon>Helicobacter</taxon>
    </lineage>
</organism>
<accession>Q7VGB8</accession>
<gene>
    <name evidence="1" type="primary">rplQ</name>
    <name type="ordered locus">HH_1404</name>
</gene>
<comment type="subunit">
    <text evidence="1">Part of the 50S ribosomal subunit. Contacts protein L32.</text>
</comment>
<comment type="similarity">
    <text evidence="1">Belongs to the bacterial ribosomal protein bL17 family.</text>
</comment>
<sequence length="116" mass="13258">MRHRHGYRKLGRTSAHRKALLKNLAIALIEYGKIEIGVFKAKELQSYIEKLITAARSGDLNAHRYVFAYLQNKSATKKLITEIAPKYASRNGGYTRIQRTRLRRGDASQMAIIELV</sequence>
<protein>
    <recommendedName>
        <fullName evidence="1">Large ribosomal subunit protein bL17</fullName>
    </recommendedName>
    <alternativeName>
        <fullName evidence="2">50S ribosomal protein L17</fullName>
    </alternativeName>
</protein>
<evidence type="ECO:0000255" key="1">
    <source>
        <dbReference type="HAMAP-Rule" id="MF_01368"/>
    </source>
</evidence>
<evidence type="ECO:0000305" key="2"/>
<dbReference type="EMBL" id="AE017125">
    <property type="protein sequence ID" value="AAP78001.1"/>
    <property type="molecule type" value="Genomic_DNA"/>
</dbReference>
<dbReference type="RefSeq" id="WP_011116244.1">
    <property type="nucleotide sequence ID" value="NC_004917.1"/>
</dbReference>
<dbReference type="SMR" id="Q7VGB8"/>
<dbReference type="STRING" id="235279.HH_1404"/>
<dbReference type="KEGG" id="hhe:HH_1404"/>
<dbReference type="eggNOG" id="COG0203">
    <property type="taxonomic scope" value="Bacteria"/>
</dbReference>
<dbReference type="HOGENOM" id="CLU_074407_2_0_7"/>
<dbReference type="OrthoDB" id="9809073at2"/>
<dbReference type="Proteomes" id="UP000002495">
    <property type="component" value="Chromosome"/>
</dbReference>
<dbReference type="GO" id="GO:0022625">
    <property type="term" value="C:cytosolic large ribosomal subunit"/>
    <property type="evidence" value="ECO:0007669"/>
    <property type="project" value="TreeGrafter"/>
</dbReference>
<dbReference type="GO" id="GO:0003735">
    <property type="term" value="F:structural constituent of ribosome"/>
    <property type="evidence" value="ECO:0007669"/>
    <property type="project" value="InterPro"/>
</dbReference>
<dbReference type="GO" id="GO:0006412">
    <property type="term" value="P:translation"/>
    <property type="evidence" value="ECO:0007669"/>
    <property type="project" value="UniProtKB-UniRule"/>
</dbReference>
<dbReference type="FunFam" id="3.90.1030.10:FF:000003">
    <property type="entry name" value="50S ribosomal protein L17"/>
    <property type="match status" value="1"/>
</dbReference>
<dbReference type="Gene3D" id="3.90.1030.10">
    <property type="entry name" value="Ribosomal protein L17"/>
    <property type="match status" value="1"/>
</dbReference>
<dbReference type="HAMAP" id="MF_01368">
    <property type="entry name" value="Ribosomal_bL17"/>
    <property type="match status" value="1"/>
</dbReference>
<dbReference type="InterPro" id="IPR000456">
    <property type="entry name" value="Ribosomal_bL17"/>
</dbReference>
<dbReference type="InterPro" id="IPR036373">
    <property type="entry name" value="Ribosomal_bL17_sf"/>
</dbReference>
<dbReference type="NCBIfam" id="TIGR00059">
    <property type="entry name" value="L17"/>
    <property type="match status" value="1"/>
</dbReference>
<dbReference type="PANTHER" id="PTHR14413:SF16">
    <property type="entry name" value="LARGE RIBOSOMAL SUBUNIT PROTEIN BL17M"/>
    <property type="match status" value="1"/>
</dbReference>
<dbReference type="PANTHER" id="PTHR14413">
    <property type="entry name" value="RIBOSOMAL PROTEIN L17"/>
    <property type="match status" value="1"/>
</dbReference>
<dbReference type="Pfam" id="PF01196">
    <property type="entry name" value="Ribosomal_L17"/>
    <property type="match status" value="1"/>
</dbReference>
<dbReference type="SUPFAM" id="SSF64263">
    <property type="entry name" value="Prokaryotic ribosomal protein L17"/>
    <property type="match status" value="1"/>
</dbReference>
<keyword id="KW-1185">Reference proteome</keyword>
<keyword id="KW-0687">Ribonucleoprotein</keyword>
<keyword id="KW-0689">Ribosomal protein</keyword>
<proteinExistence type="inferred from homology"/>
<feature type="chain" id="PRO_1000055841" description="Large ribosomal subunit protein bL17">
    <location>
        <begin position="1"/>
        <end position="116"/>
    </location>
</feature>